<name>RECR_MYCSJ</name>
<keyword id="KW-0227">DNA damage</keyword>
<keyword id="KW-0233">DNA recombination</keyword>
<keyword id="KW-0234">DNA repair</keyword>
<keyword id="KW-0479">Metal-binding</keyword>
<keyword id="KW-0862">Zinc</keyword>
<keyword id="KW-0863">Zinc-finger</keyword>
<protein>
    <recommendedName>
        <fullName evidence="1">Recombination protein RecR</fullName>
    </recommendedName>
</protein>
<organism>
    <name type="scientific">Mycobacterium sp. (strain JLS)</name>
    <dbReference type="NCBI Taxonomy" id="164757"/>
    <lineage>
        <taxon>Bacteria</taxon>
        <taxon>Bacillati</taxon>
        <taxon>Actinomycetota</taxon>
        <taxon>Actinomycetes</taxon>
        <taxon>Mycobacteriales</taxon>
        <taxon>Mycobacteriaceae</taxon>
        <taxon>Mycobacterium</taxon>
    </lineage>
</organism>
<reference key="1">
    <citation type="submission" date="2007-02" db="EMBL/GenBank/DDBJ databases">
        <title>Complete sequence of Mycobacterium sp. JLS.</title>
        <authorList>
            <consortium name="US DOE Joint Genome Institute"/>
            <person name="Copeland A."/>
            <person name="Lucas S."/>
            <person name="Lapidus A."/>
            <person name="Barry K."/>
            <person name="Detter J.C."/>
            <person name="Glavina del Rio T."/>
            <person name="Hammon N."/>
            <person name="Israni S."/>
            <person name="Dalin E."/>
            <person name="Tice H."/>
            <person name="Pitluck S."/>
            <person name="Chain P."/>
            <person name="Malfatti S."/>
            <person name="Shin M."/>
            <person name="Vergez L."/>
            <person name="Schmutz J."/>
            <person name="Larimer F."/>
            <person name="Land M."/>
            <person name="Hauser L."/>
            <person name="Kyrpides N."/>
            <person name="Mikhailova N."/>
            <person name="Miller C.D."/>
            <person name="Anderson A.J."/>
            <person name="Sims R.C."/>
            <person name="Richardson P."/>
        </authorList>
    </citation>
    <scope>NUCLEOTIDE SEQUENCE [LARGE SCALE GENOMIC DNA]</scope>
    <source>
        <strain>JLS</strain>
    </source>
</reference>
<gene>
    <name evidence="1" type="primary">recR</name>
    <name type="ordered locus">Mjls_5271</name>
</gene>
<proteinExistence type="inferred from homology"/>
<feature type="chain" id="PRO_0000322913" description="Recombination protein RecR">
    <location>
        <begin position="1"/>
        <end position="203"/>
    </location>
</feature>
<feature type="domain" description="Toprim" evidence="1">
    <location>
        <begin position="79"/>
        <end position="179"/>
    </location>
</feature>
<feature type="zinc finger region" description="C4-type" evidence="1">
    <location>
        <begin position="56"/>
        <end position="71"/>
    </location>
</feature>
<accession>A3Q7A7</accession>
<comment type="function">
    <text evidence="1">May play a role in DNA repair. It seems to be involved in an RecBC-independent recombinational process of DNA repair. It may act with RecF and RecO.</text>
</comment>
<comment type="similarity">
    <text evidence="1">Belongs to the RecR family.</text>
</comment>
<evidence type="ECO:0000255" key="1">
    <source>
        <dbReference type="HAMAP-Rule" id="MF_00017"/>
    </source>
</evidence>
<sequence length="203" mass="22086">MFEGPVQDLIDELGKLPGIGPKSAQRIAFHLLSVEPPDIDRLTAVLNRIRDGVKFCEVCGNVSDADRCRICSDPRRDASLVCVVEEPKDVQAVERTREFRGRYHVLGGALDPLSGVGPDQLRIRELLNRIGERVDGVDVAEVIIATDPNTEGEATATYLVRMLRDIPGLTVTRIASGLPMGGDLEFADELTLGRALAGRRAMA</sequence>
<dbReference type="EMBL" id="CP000580">
    <property type="protein sequence ID" value="ABO01035.1"/>
    <property type="molecule type" value="Genomic_DNA"/>
</dbReference>
<dbReference type="SMR" id="A3Q7A7"/>
<dbReference type="KEGG" id="mjl:Mjls_5271"/>
<dbReference type="HOGENOM" id="CLU_060739_1_0_11"/>
<dbReference type="BioCyc" id="MSP164757:G1G8C-5325-MONOMER"/>
<dbReference type="GO" id="GO:0003677">
    <property type="term" value="F:DNA binding"/>
    <property type="evidence" value="ECO:0007669"/>
    <property type="project" value="UniProtKB-UniRule"/>
</dbReference>
<dbReference type="GO" id="GO:0008270">
    <property type="term" value="F:zinc ion binding"/>
    <property type="evidence" value="ECO:0007669"/>
    <property type="project" value="UniProtKB-KW"/>
</dbReference>
<dbReference type="GO" id="GO:0006310">
    <property type="term" value="P:DNA recombination"/>
    <property type="evidence" value="ECO:0007669"/>
    <property type="project" value="UniProtKB-UniRule"/>
</dbReference>
<dbReference type="GO" id="GO:0006281">
    <property type="term" value="P:DNA repair"/>
    <property type="evidence" value="ECO:0007669"/>
    <property type="project" value="UniProtKB-UniRule"/>
</dbReference>
<dbReference type="CDD" id="cd01025">
    <property type="entry name" value="TOPRIM_recR"/>
    <property type="match status" value="1"/>
</dbReference>
<dbReference type="Gene3D" id="3.30.60.80">
    <property type="match status" value="1"/>
</dbReference>
<dbReference type="Gene3D" id="3.40.1360.10">
    <property type="match status" value="1"/>
</dbReference>
<dbReference type="Gene3D" id="6.10.250.240">
    <property type="match status" value="1"/>
</dbReference>
<dbReference type="Gene3D" id="1.10.8.420">
    <property type="entry name" value="RecR Domain 1"/>
    <property type="match status" value="1"/>
</dbReference>
<dbReference type="HAMAP" id="MF_00017">
    <property type="entry name" value="RecR"/>
    <property type="match status" value="1"/>
</dbReference>
<dbReference type="InterPro" id="IPR000093">
    <property type="entry name" value="DNA_Rcmb_RecR"/>
</dbReference>
<dbReference type="InterPro" id="IPR003583">
    <property type="entry name" value="Hlx-hairpin-Hlx_DNA-bd_motif"/>
</dbReference>
<dbReference type="InterPro" id="IPR023627">
    <property type="entry name" value="Rcmb_RecR"/>
</dbReference>
<dbReference type="InterPro" id="IPR015967">
    <property type="entry name" value="Rcmb_RecR_Znf"/>
</dbReference>
<dbReference type="InterPro" id="IPR006171">
    <property type="entry name" value="TOPRIM_dom"/>
</dbReference>
<dbReference type="InterPro" id="IPR034137">
    <property type="entry name" value="TOPRIM_RecR"/>
</dbReference>
<dbReference type="NCBIfam" id="TIGR00615">
    <property type="entry name" value="recR"/>
    <property type="match status" value="1"/>
</dbReference>
<dbReference type="PANTHER" id="PTHR30446">
    <property type="entry name" value="RECOMBINATION PROTEIN RECR"/>
    <property type="match status" value="1"/>
</dbReference>
<dbReference type="PANTHER" id="PTHR30446:SF0">
    <property type="entry name" value="RECOMBINATION PROTEIN RECR"/>
    <property type="match status" value="1"/>
</dbReference>
<dbReference type="Pfam" id="PF21175">
    <property type="entry name" value="RecR_C"/>
    <property type="match status" value="1"/>
</dbReference>
<dbReference type="Pfam" id="PF21176">
    <property type="entry name" value="RecR_HhH"/>
    <property type="match status" value="1"/>
</dbReference>
<dbReference type="Pfam" id="PF02132">
    <property type="entry name" value="RecR_ZnF"/>
    <property type="match status" value="1"/>
</dbReference>
<dbReference type="Pfam" id="PF13662">
    <property type="entry name" value="Toprim_4"/>
    <property type="match status" value="1"/>
</dbReference>
<dbReference type="SMART" id="SM00278">
    <property type="entry name" value="HhH1"/>
    <property type="match status" value="1"/>
</dbReference>
<dbReference type="SMART" id="SM00493">
    <property type="entry name" value="TOPRIM"/>
    <property type="match status" value="1"/>
</dbReference>
<dbReference type="SUPFAM" id="SSF111304">
    <property type="entry name" value="Recombination protein RecR"/>
    <property type="match status" value="1"/>
</dbReference>
<dbReference type="PROSITE" id="PS01300">
    <property type="entry name" value="RECR"/>
    <property type="match status" value="1"/>
</dbReference>
<dbReference type="PROSITE" id="PS50880">
    <property type="entry name" value="TOPRIM"/>
    <property type="match status" value="1"/>
</dbReference>